<proteinExistence type="evidence at transcript level"/>
<protein>
    <recommendedName>
        <fullName>Receptor-like serine/threonine-protein kinase At1g78530</fullName>
        <ecNumber>2.7.11.1</ecNumber>
    </recommendedName>
</protein>
<feature type="chain" id="PRO_0000403346" description="Receptor-like serine/threonine-protein kinase At1g78530">
    <location>
        <begin position="1"/>
        <end position="355"/>
    </location>
</feature>
<feature type="topological domain" description="Extracellular" evidence="3">
    <location>
        <begin position="1"/>
        <end position="8"/>
    </location>
</feature>
<feature type="transmembrane region" description="Helical" evidence="3">
    <location>
        <begin position="9"/>
        <end position="29"/>
    </location>
</feature>
<feature type="topological domain" description="Cytoplasmic" evidence="3">
    <location>
        <begin position="30"/>
        <end position="355"/>
    </location>
</feature>
<feature type="domain" description="Protein kinase" evidence="4">
    <location>
        <begin position="75"/>
        <end position="347"/>
    </location>
</feature>
<feature type="active site" description="Proton acceptor" evidence="4 5">
    <location>
        <position position="197"/>
    </location>
</feature>
<feature type="binding site" evidence="4">
    <location>
        <begin position="81"/>
        <end position="89"/>
    </location>
    <ligand>
        <name>ATP</name>
        <dbReference type="ChEBI" id="CHEBI:30616"/>
    </ligand>
</feature>
<feature type="binding site" evidence="4">
    <location>
        <position position="103"/>
    </location>
    <ligand>
        <name>ATP</name>
        <dbReference type="ChEBI" id="CHEBI:30616"/>
    </ligand>
</feature>
<feature type="modified residue" description="Phosphotyrosine" evidence="2">
    <location>
        <position position="148"/>
    </location>
</feature>
<feature type="modified residue" description="Phosphoserine" evidence="2">
    <location>
        <position position="201"/>
    </location>
</feature>
<feature type="modified residue" description="Phosphoserine" evidence="2">
    <location>
        <position position="230"/>
    </location>
</feature>
<feature type="modified residue" description="Phosphothreonine" evidence="2">
    <location>
        <position position="231"/>
    </location>
</feature>
<feature type="modified residue" description="Phosphothreonine" evidence="2">
    <location>
        <position position="236"/>
    </location>
</feature>
<feature type="modified residue" description="Phosphotyrosine" evidence="2">
    <location>
        <position position="244"/>
    </location>
</feature>
<comment type="catalytic activity">
    <reaction>
        <text>L-seryl-[protein] + ATP = O-phospho-L-seryl-[protein] + ADP + H(+)</text>
        <dbReference type="Rhea" id="RHEA:17989"/>
        <dbReference type="Rhea" id="RHEA-COMP:9863"/>
        <dbReference type="Rhea" id="RHEA-COMP:11604"/>
        <dbReference type="ChEBI" id="CHEBI:15378"/>
        <dbReference type="ChEBI" id="CHEBI:29999"/>
        <dbReference type="ChEBI" id="CHEBI:30616"/>
        <dbReference type="ChEBI" id="CHEBI:83421"/>
        <dbReference type="ChEBI" id="CHEBI:456216"/>
        <dbReference type="EC" id="2.7.11.1"/>
    </reaction>
</comment>
<comment type="catalytic activity">
    <reaction>
        <text>L-threonyl-[protein] + ATP = O-phospho-L-threonyl-[protein] + ADP + H(+)</text>
        <dbReference type="Rhea" id="RHEA:46608"/>
        <dbReference type="Rhea" id="RHEA-COMP:11060"/>
        <dbReference type="Rhea" id="RHEA-COMP:11605"/>
        <dbReference type="ChEBI" id="CHEBI:15378"/>
        <dbReference type="ChEBI" id="CHEBI:30013"/>
        <dbReference type="ChEBI" id="CHEBI:30616"/>
        <dbReference type="ChEBI" id="CHEBI:61977"/>
        <dbReference type="ChEBI" id="CHEBI:456216"/>
        <dbReference type="EC" id="2.7.11.1"/>
    </reaction>
</comment>
<comment type="subcellular location">
    <subcellularLocation>
        <location evidence="1">Cell membrane</location>
        <topology evidence="1">Single-pass membrane protein</topology>
    </subcellularLocation>
</comment>
<comment type="similarity">
    <text evidence="4">Belongs to the protein kinase superfamily. Ser/Thr protein kinase family.</text>
</comment>
<accession>Q9SYM9</accession>
<organism>
    <name type="scientific">Arabidopsis thaliana</name>
    <name type="common">Mouse-ear cress</name>
    <dbReference type="NCBI Taxonomy" id="3702"/>
    <lineage>
        <taxon>Eukaryota</taxon>
        <taxon>Viridiplantae</taxon>
        <taxon>Streptophyta</taxon>
        <taxon>Embryophyta</taxon>
        <taxon>Tracheophyta</taxon>
        <taxon>Spermatophyta</taxon>
        <taxon>Magnoliopsida</taxon>
        <taxon>eudicotyledons</taxon>
        <taxon>Gunneridae</taxon>
        <taxon>Pentapetalae</taxon>
        <taxon>rosids</taxon>
        <taxon>malvids</taxon>
        <taxon>Brassicales</taxon>
        <taxon>Brassicaceae</taxon>
        <taxon>Camelineae</taxon>
        <taxon>Arabidopsis</taxon>
    </lineage>
</organism>
<sequence>MANAKETTFYITISVVAFVIGKIVIALLFYKRWKRKHTIHENGFPVKGGGKMVMFRSQLLNSVSSDMFMKKTHKLSNKDILGSGGFGTVYRLVIDDSTTFAVKRLNRGTSERDRGFHRELEAMADIKHRNIVTLHGYFTSPHYNLLIYELMPNGSLDSFLHGRKALDWASRYRIAVGAARGISYLHHDCIPHIIHRDIKSSNILLDHNMEARVSDFGLATLMEPDKTHVSTFVAGTFGYLAPEYFDTGKATMKGDVYSFGVVLLELLTGRKPTDDEFFEEGTKLVTWVKGVVRDQREEVVIDNRLRGSSVQENEEMNDVFGIAMMCLEPEPAIRPAMTEVVKLLEYIKLSTRSSF</sequence>
<dbReference type="EC" id="2.7.11.1"/>
<dbReference type="EMBL" id="AC007260">
    <property type="protein sequence ID" value="AAD30583.1"/>
    <property type="molecule type" value="Genomic_DNA"/>
</dbReference>
<dbReference type="EMBL" id="CP002684">
    <property type="protein sequence ID" value="AEE36117.1"/>
    <property type="molecule type" value="Genomic_DNA"/>
</dbReference>
<dbReference type="EMBL" id="AK226294">
    <property type="protein sequence ID" value="BAE98451.1"/>
    <property type="molecule type" value="mRNA"/>
</dbReference>
<dbReference type="PIR" id="G96813">
    <property type="entry name" value="G96813"/>
</dbReference>
<dbReference type="RefSeq" id="NP_177974.1">
    <property type="nucleotide sequence ID" value="NM_106500.3"/>
</dbReference>
<dbReference type="SMR" id="Q9SYM9"/>
<dbReference type="FunCoup" id="Q9SYM9">
    <property type="interactions" value="302"/>
</dbReference>
<dbReference type="STRING" id="3702.Q9SYM9"/>
<dbReference type="PaxDb" id="3702-AT1G78530.1"/>
<dbReference type="EnsemblPlants" id="AT1G78530.1">
    <property type="protein sequence ID" value="AT1G78530.1"/>
    <property type="gene ID" value="AT1G78530"/>
</dbReference>
<dbReference type="GeneID" id="844189"/>
<dbReference type="Gramene" id="AT1G78530.1">
    <property type="protein sequence ID" value="AT1G78530.1"/>
    <property type="gene ID" value="AT1G78530"/>
</dbReference>
<dbReference type="KEGG" id="ath:AT1G78530"/>
<dbReference type="Araport" id="AT1G78530"/>
<dbReference type="TAIR" id="AT1G78530"/>
<dbReference type="eggNOG" id="KOG1187">
    <property type="taxonomic scope" value="Eukaryota"/>
</dbReference>
<dbReference type="HOGENOM" id="CLU_000288_21_4_1"/>
<dbReference type="InParanoid" id="Q9SYM9"/>
<dbReference type="OMA" id="FLTMIMG"/>
<dbReference type="OrthoDB" id="4062651at2759"/>
<dbReference type="PhylomeDB" id="Q9SYM9"/>
<dbReference type="PRO" id="PR:Q9SYM9"/>
<dbReference type="Proteomes" id="UP000006548">
    <property type="component" value="Chromosome 1"/>
</dbReference>
<dbReference type="ExpressionAtlas" id="Q9SYM9">
    <property type="expression patterns" value="baseline and differential"/>
</dbReference>
<dbReference type="GO" id="GO:0005886">
    <property type="term" value="C:plasma membrane"/>
    <property type="evidence" value="ECO:0007669"/>
    <property type="project" value="UniProtKB-SubCell"/>
</dbReference>
<dbReference type="GO" id="GO:0005524">
    <property type="term" value="F:ATP binding"/>
    <property type="evidence" value="ECO:0007669"/>
    <property type="project" value="UniProtKB-KW"/>
</dbReference>
<dbReference type="GO" id="GO:0106310">
    <property type="term" value="F:protein serine kinase activity"/>
    <property type="evidence" value="ECO:0007669"/>
    <property type="project" value="RHEA"/>
</dbReference>
<dbReference type="GO" id="GO:0004674">
    <property type="term" value="F:protein serine/threonine kinase activity"/>
    <property type="evidence" value="ECO:0007669"/>
    <property type="project" value="UniProtKB-KW"/>
</dbReference>
<dbReference type="FunFam" id="1.10.510.10:FF:000146">
    <property type="entry name" value="LRR receptor-like serine/threonine-protein kinase IOS1"/>
    <property type="match status" value="1"/>
</dbReference>
<dbReference type="FunFam" id="3.30.200.20:FF:000434">
    <property type="entry name" value="Receptor-like serine/threonine-protein kinase"/>
    <property type="match status" value="1"/>
</dbReference>
<dbReference type="Gene3D" id="3.30.200.20">
    <property type="entry name" value="Phosphorylase Kinase, domain 1"/>
    <property type="match status" value="1"/>
</dbReference>
<dbReference type="Gene3D" id="1.10.510.10">
    <property type="entry name" value="Transferase(Phosphotransferase) domain 1"/>
    <property type="match status" value="1"/>
</dbReference>
<dbReference type="InterPro" id="IPR011009">
    <property type="entry name" value="Kinase-like_dom_sf"/>
</dbReference>
<dbReference type="InterPro" id="IPR000719">
    <property type="entry name" value="Prot_kinase_dom"/>
</dbReference>
<dbReference type="InterPro" id="IPR017441">
    <property type="entry name" value="Protein_kinase_ATP_BS"/>
</dbReference>
<dbReference type="InterPro" id="IPR008271">
    <property type="entry name" value="Ser/Thr_kinase_AS"/>
</dbReference>
<dbReference type="PANTHER" id="PTHR47989">
    <property type="entry name" value="OS01G0750732 PROTEIN"/>
    <property type="match status" value="1"/>
</dbReference>
<dbReference type="PANTHER" id="PTHR47989:SF65">
    <property type="entry name" value="PROTEIN KINASE DOMAIN-CONTAINING PROTEIN"/>
    <property type="match status" value="1"/>
</dbReference>
<dbReference type="Pfam" id="PF00069">
    <property type="entry name" value="Pkinase"/>
    <property type="match status" value="1"/>
</dbReference>
<dbReference type="SMART" id="SM00220">
    <property type="entry name" value="S_TKc"/>
    <property type="match status" value="1"/>
</dbReference>
<dbReference type="SUPFAM" id="SSF56112">
    <property type="entry name" value="Protein kinase-like (PK-like)"/>
    <property type="match status" value="1"/>
</dbReference>
<dbReference type="PROSITE" id="PS00107">
    <property type="entry name" value="PROTEIN_KINASE_ATP"/>
    <property type="match status" value="1"/>
</dbReference>
<dbReference type="PROSITE" id="PS50011">
    <property type="entry name" value="PROTEIN_KINASE_DOM"/>
    <property type="match status" value="1"/>
</dbReference>
<dbReference type="PROSITE" id="PS00108">
    <property type="entry name" value="PROTEIN_KINASE_ST"/>
    <property type="match status" value="1"/>
</dbReference>
<reference key="1">
    <citation type="journal article" date="2000" name="Nature">
        <title>Sequence and analysis of chromosome 1 of the plant Arabidopsis thaliana.</title>
        <authorList>
            <person name="Theologis A."/>
            <person name="Ecker J.R."/>
            <person name="Palm C.J."/>
            <person name="Federspiel N.A."/>
            <person name="Kaul S."/>
            <person name="White O."/>
            <person name="Alonso J."/>
            <person name="Altafi H."/>
            <person name="Araujo R."/>
            <person name="Bowman C.L."/>
            <person name="Brooks S.Y."/>
            <person name="Buehler E."/>
            <person name="Chan A."/>
            <person name="Chao Q."/>
            <person name="Chen H."/>
            <person name="Cheuk R.F."/>
            <person name="Chin C.W."/>
            <person name="Chung M.K."/>
            <person name="Conn L."/>
            <person name="Conway A.B."/>
            <person name="Conway A.R."/>
            <person name="Creasy T.H."/>
            <person name="Dewar K."/>
            <person name="Dunn P."/>
            <person name="Etgu P."/>
            <person name="Feldblyum T.V."/>
            <person name="Feng J.-D."/>
            <person name="Fong B."/>
            <person name="Fujii C.Y."/>
            <person name="Gill J.E."/>
            <person name="Goldsmith A.D."/>
            <person name="Haas B."/>
            <person name="Hansen N.F."/>
            <person name="Hughes B."/>
            <person name="Huizar L."/>
            <person name="Hunter J.L."/>
            <person name="Jenkins J."/>
            <person name="Johnson-Hopson C."/>
            <person name="Khan S."/>
            <person name="Khaykin E."/>
            <person name="Kim C.J."/>
            <person name="Koo H.L."/>
            <person name="Kremenetskaia I."/>
            <person name="Kurtz D.B."/>
            <person name="Kwan A."/>
            <person name="Lam B."/>
            <person name="Langin-Hooper S."/>
            <person name="Lee A."/>
            <person name="Lee J.M."/>
            <person name="Lenz C.A."/>
            <person name="Li J.H."/>
            <person name="Li Y.-P."/>
            <person name="Lin X."/>
            <person name="Liu S.X."/>
            <person name="Liu Z.A."/>
            <person name="Luros J.S."/>
            <person name="Maiti R."/>
            <person name="Marziali A."/>
            <person name="Militscher J."/>
            <person name="Miranda M."/>
            <person name="Nguyen M."/>
            <person name="Nierman W.C."/>
            <person name="Osborne B.I."/>
            <person name="Pai G."/>
            <person name="Peterson J."/>
            <person name="Pham P.K."/>
            <person name="Rizzo M."/>
            <person name="Rooney T."/>
            <person name="Rowley D."/>
            <person name="Sakano H."/>
            <person name="Salzberg S.L."/>
            <person name="Schwartz J.R."/>
            <person name="Shinn P."/>
            <person name="Southwick A.M."/>
            <person name="Sun H."/>
            <person name="Tallon L.J."/>
            <person name="Tambunga G."/>
            <person name="Toriumi M.J."/>
            <person name="Town C.D."/>
            <person name="Utterback T."/>
            <person name="Van Aken S."/>
            <person name="Vaysberg M."/>
            <person name="Vysotskaia V.S."/>
            <person name="Walker M."/>
            <person name="Wu D."/>
            <person name="Yu G."/>
            <person name="Fraser C.M."/>
            <person name="Venter J.C."/>
            <person name="Davis R.W."/>
        </authorList>
    </citation>
    <scope>NUCLEOTIDE SEQUENCE [LARGE SCALE GENOMIC DNA]</scope>
    <source>
        <strain>cv. Columbia</strain>
    </source>
</reference>
<reference key="2">
    <citation type="journal article" date="2017" name="Plant J.">
        <title>Araport11: a complete reannotation of the Arabidopsis thaliana reference genome.</title>
        <authorList>
            <person name="Cheng C.Y."/>
            <person name="Krishnakumar V."/>
            <person name="Chan A.P."/>
            <person name="Thibaud-Nissen F."/>
            <person name="Schobel S."/>
            <person name="Town C.D."/>
        </authorList>
    </citation>
    <scope>GENOME REANNOTATION</scope>
    <source>
        <strain>cv. Columbia</strain>
    </source>
</reference>
<reference key="3">
    <citation type="submission" date="2006-07" db="EMBL/GenBank/DDBJ databases">
        <title>Large-scale analysis of RIKEN Arabidopsis full-length (RAFL) cDNAs.</title>
        <authorList>
            <person name="Totoki Y."/>
            <person name="Seki M."/>
            <person name="Ishida J."/>
            <person name="Nakajima M."/>
            <person name="Enju A."/>
            <person name="Kamiya A."/>
            <person name="Narusaka M."/>
            <person name="Shin-i T."/>
            <person name="Nakagawa M."/>
            <person name="Sakamoto N."/>
            <person name="Oishi K."/>
            <person name="Kohara Y."/>
            <person name="Kobayashi M."/>
            <person name="Toyoda A."/>
            <person name="Sakaki Y."/>
            <person name="Sakurai T."/>
            <person name="Iida K."/>
            <person name="Akiyama K."/>
            <person name="Satou M."/>
            <person name="Toyoda T."/>
            <person name="Konagaya A."/>
            <person name="Carninci P."/>
            <person name="Kawai J."/>
            <person name="Hayashizaki Y."/>
            <person name="Shinozaki K."/>
        </authorList>
    </citation>
    <scope>NUCLEOTIDE SEQUENCE [LARGE SCALE MRNA]</scope>
    <source>
        <strain>cv. Columbia</strain>
    </source>
</reference>
<evidence type="ECO:0000250" key="1"/>
<evidence type="ECO:0000250" key="2">
    <source>
        <dbReference type="UniProtKB" id="O48814"/>
    </source>
</evidence>
<evidence type="ECO:0000255" key="3"/>
<evidence type="ECO:0000255" key="4">
    <source>
        <dbReference type="PROSITE-ProRule" id="PRU00159"/>
    </source>
</evidence>
<evidence type="ECO:0000255" key="5">
    <source>
        <dbReference type="PROSITE-ProRule" id="PRU10027"/>
    </source>
</evidence>
<keyword id="KW-0067">ATP-binding</keyword>
<keyword id="KW-1003">Cell membrane</keyword>
<keyword id="KW-0418">Kinase</keyword>
<keyword id="KW-0472">Membrane</keyword>
<keyword id="KW-0547">Nucleotide-binding</keyword>
<keyword id="KW-0597">Phosphoprotein</keyword>
<keyword id="KW-0675">Receptor</keyword>
<keyword id="KW-1185">Reference proteome</keyword>
<keyword id="KW-0723">Serine/threonine-protein kinase</keyword>
<keyword id="KW-0808">Transferase</keyword>
<keyword id="KW-0812">Transmembrane</keyword>
<keyword id="KW-1133">Transmembrane helix</keyword>
<name>Y1853_ARATH</name>
<gene>
    <name type="ordered locus">At1g78530</name>
    <name type="ORF">T30F21.14</name>
</gene>